<comment type="function">
    <text evidence="1">Small GTPase that acts as an allosteric activator of the canonical mTORC1 complex, an evolutionarily conserved central nutrient sensor that stimulates anabolic reactions and macromolecule biosynthesis to promote cellular biomass generation and growth. In response to nutrients, growth factors or amino acids, specifically activates the protein kinase activity of MTOR, the catalytic component of the mTORC1 complex: acts by causing a conformational change that allows the alignment of residues in the active site of MTOR, thereby enhancing the phosphorylation of ribosomal protein S6 kinase (RPS6KB1 and RPS6KB2) and EIF4EBP1 (4E-BP1). RHEB is also required for localization of the TSC-TBC complex to lysosomal membranes. In response to starvation, RHEB is inactivated by the TSC-TBC complex, preventing activation of mTORC1. Has low intrinsic GTPase activity.</text>
</comment>
<comment type="catalytic activity">
    <reaction evidence="1">
        <text>GTP + H2O = GDP + phosphate + H(+)</text>
        <dbReference type="Rhea" id="RHEA:19669"/>
        <dbReference type="ChEBI" id="CHEBI:15377"/>
        <dbReference type="ChEBI" id="CHEBI:15378"/>
        <dbReference type="ChEBI" id="CHEBI:37565"/>
        <dbReference type="ChEBI" id="CHEBI:43474"/>
        <dbReference type="ChEBI" id="CHEBI:58189"/>
    </reaction>
    <physiologicalReaction direction="left-to-right" evidence="1">
        <dbReference type="Rhea" id="RHEA:19670"/>
    </physiologicalReaction>
</comment>
<comment type="activity regulation">
    <text evidence="1">Alternates between an inactive form bound to GDP and an active form bound to GTP. Inactivated by the TSC-TBC complex via the GTPase activating protein (GAP) domain of TSC2 (By similarity). Autoinhibited by Tyr-35, which constrains the active site conformation, restricting the access of the catalytic Asp-65 to the nucleotide-binding pocket (By similarity).</text>
</comment>
<comment type="subunit">
    <text evidence="1">Associates with the mTORC1 complex (MTOR, MLST8 and RPTOR) in a guanyl nucleotide-independent manner. Interacts with TSC2. Interacts with MCRS1; the interaction maintains RHEB at the lysosome in its active GTP-bound form and prevents its interaction with the mTORC1 complex inhibitor TSC2, ensuring activation of the mTORC1 complex by RHEB. Interacts (when prenylated) with PDE6D; this promotes release from membranes.</text>
</comment>
<comment type="subcellular location">
    <subcellularLocation>
        <location evidence="1">Endomembrane system</location>
        <topology evidence="1">Lipid-anchor</topology>
        <orientation evidence="1">Cytoplasmic side</orientation>
    </subcellularLocation>
    <subcellularLocation>
        <location evidence="1">Lysosome membrane</location>
        <topology evidence="1">Lipid-anchor</topology>
        <orientation evidence="1">Cytoplasmic side</orientation>
    </subcellularLocation>
    <subcellularLocation>
        <location evidence="1">Golgi apparatus membrane</location>
        <topology evidence="1">Lipid-anchor</topology>
        <orientation evidence="1">Cytoplasmic side</orientation>
    </subcellularLocation>
    <subcellularLocation>
        <location evidence="1">Endoplasmic reticulum membrane</location>
        <topology evidence="1">Lipid-anchor</topology>
        <orientation evidence="1">Cytoplasmic side</orientation>
    </subcellularLocation>
    <subcellularLocation>
        <location evidence="1">Cytoplasm</location>
        <location evidence="1">Cytosol</location>
    </subcellularLocation>
    <text evidence="1">Farnesylation is required for recruitment to lysosomal membranes, where it activates the mTORC1 complex.</text>
</comment>
<comment type="PTM">
    <text evidence="1">Farnesylation is important for efficiently activating mTORC1-mediated signaling.</text>
</comment>
<comment type="PTM">
    <text evidence="1">Polyubiquitinated in response to amino acid, promoting its interaction with MTOR and mTORC1 activation. Deubiquitination by ATXN3 promotes recruitment of the TSC-TBC complex and RHEB inactivation by TSC2. Monoubiquitinated at Lys-8 by RNF152, promoting its association with the TSC-TBC complex. Deubiquitinated at Lys-8 by USP4, promoting mTORC1 activation.</text>
</comment>
<comment type="PTM">
    <text evidence="2">Phosphorylation by MAPKAPK5 impairs GTP-binding and inactivation.</text>
</comment>
<comment type="miscellaneous">
    <text evidence="1">The conserved catalytic Gln-64 found in other Ras-like GTPases seems not to be involved in GTP hydrolysis in RHEB.</text>
</comment>
<comment type="similarity">
    <text evidence="3">Belongs to the small GTPase superfamily. Rheb family.</text>
</comment>
<feature type="chain" id="PRO_0000240343" description="GTP-binding protein Rheb">
    <location>
        <begin position="1"/>
        <end position="181"/>
    </location>
</feature>
<feature type="propeptide" id="PRO_0000281364" description="Removed in mature form" evidence="1">
    <location>
        <begin position="182"/>
        <end position="184"/>
    </location>
</feature>
<feature type="short sequence motif" description="Effector region">
    <location>
        <begin position="35"/>
        <end position="43"/>
    </location>
</feature>
<feature type="binding site" evidence="1">
    <location>
        <position position="16"/>
    </location>
    <ligand>
        <name>GTP</name>
        <dbReference type="ChEBI" id="CHEBI:37565"/>
    </ligand>
</feature>
<feature type="binding site" evidence="1">
    <location>
        <position position="18"/>
    </location>
    <ligand>
        <name>GTP</name>
        <dbReference type="ChEBI" id="CHEBI:37565"/>
    </ligand>
</feature>
<feature type="binding site" evidence="1">
    <location>
        <position position="19"/>
    </location>
    <ligand>
        <name>GTP</name>
        <dbReference type="ChEBI" id="CHEBI:37565"/>
    </ligand>
</feature>
<feature type="binding site" evidence="1">
    <location>
        <position position="20"/>
    </location>
    <ligand>
        <name>GTP</name>
        <dbReference type="ChEBI" id="CHEBI:37565"/>
    </ligand>
</feature>
<feature type="binding site" evidence="1">
    <location>
        <position position="20"/>
    </location>
    <ligand>
        <name>Mg(2+)</name>
        <dbReference type="ChEBI" id="CHEBI:18420"/>
    </ligand>
</feature>
<feature type="binding site" evidence="1">
    <location>
        <position position="21"/>
    </location>
    <ligand>
        <name>GTP</name>
        <dbReference type="ChEBI" id="CHEBI:37565"/>
    </ligand>
</feature>
<feature type="binding site" evidence="1">
    <location>
        <position position="32"/>
    </location>
    <ligand>
        <name>GTP</name>
        <dbReference type="ChEBI" id="CHEBI:37565"/>
    </ligand>
</feature>
<feature type="binding site" evidence="1">
    <location>
        <position position="35"/>
    </location>
    <ligand>
        <name>GTP</name>
        <dbReference type="ChEBI" id="CHEBI:37565"/>
    </ligand>
</feature>
<feature type="binding site" evidence="1">
    <location>
        <position position="38"/>
    </location>
    <ligand>
        <name>GTP</name>
        <dbReference type="ChEBI" id="CHEBI:37565"/>
    </ligand>
</feature>
<feature type="binding site" evidence="1">
    <location>
        <position position="38"/>
    </location>
    <ligand>
        <name>Mg(2+)</name>
        <dbReference type="ChEBI" id="CHEBI:18420"/>
    </ligand>
</feature>
<feature type="binding site" evidence="1">
    <location>
        <position position="119"/>
    </location>
    <ligand>
        <name>GTP</name>
        <dbReference type="ChEBI" id="CHEBI:37565"/>
    </ligand>
</feature>
<feature type="binding site" evidence="1">
    <location>
        <position position="122"/>
    </location>
    <ligand>
        <name>GTP</name>
        <dbReference type="ChEBI" id="CHEBI:37565"/>
    </ligand>
</feature>
<feature type="binding site" evidence="1">
    <location>
        <position position="150"/>
    </location>
    <ligand>
        <name>GTP</name>
        <dbReference type="ChEBI" id="CHEBI:37565"/>
    </ligand>
</feature>
<feature type="site" description="Important for autoinhibition of GTPase activity" evidence="1">
    <location>
        <position position="35"/>
    </location>
</feature>
<feature type="modified residue" description="Phosphoserine; by MAPKAPK5" evidence="2">
    <location>
        <position position="130"/>
    </location>
</feature>
<feature type="modified residue" description="Cysteine methyl ester" evidence="1">
    <location>
        <position position="181"/>
    </location>
</feature>
<feature type="lipid moiety-binding region" description="S-farnesyl cysteine" evidence="1">
    <location>
        <position position="181"/>
    </location>
</feature>
<feature type="cross-link" description="Glycyl lysine isopeptide (Lys-Gly) (interchain with G-Cter in ubiquitin)" evidence="1">
    <location>
        <position position="8"/>
    </location>
</feature>
<name>RHEB_BOVIN</name>
<organism>
    <name type="scientific">Bos taurus</name>
    <name type="common">Bovine</name>
    <dbReference type="NCBI Taxonomy" id="9913"/>
    <lineage>
        <taxon>Eukaryota</taxon>
        <taxon>Metazoa</taxon>
        <taxon>Chordata</taxon>
        <taxon>Craniata</taxon>
        <taxon>Vertebrata</taxon>
        <taxon>Euteleostomi</taxon>
        <taxon>Mammalia</taxon>
        <taxon>Eutheria</taxon>
        <taxon>Laurasiatheria</taxon>
        <taxon>Artiodactyla</taxon>
        <taxon>Ruminantia</taxon>
        <taxon>Pecora</taxon>
        <taxon>Bovidae</taxon>
        <taxon>Bovinae</taxon>
        <taxon>Bos</taxon>
    </lineage>
</organism>
<sequence>MPQSKSRKIAILGYRSVGKSSLTIQFVEGQFVDSYDPTIKNTFTKLITVNGQEYHLQLVDTAGQDEYSIFPQTYSIDINGYILVYSVTSIKSFEVIKVIHGKLLDMVGKVQIPIMLVGNKKDLHMERVISYEEGKALAESWNAAFLESSAKENQTAVDVFRRIILEAEKIDGAASQGKSSCSVM</sequence>
<gene>
    <name type="primary">RHEB</name>
</gene>
<dbReference type="EC" id="3.6.5.-" evidence="1"/>
<dbReference type="EMBL" id="AY911379">
    <property type="protein sequence ID" value="AAW82142.1"/>
    <property type="molecule type" value="mRNA"/>
</dbReference>
<dbReference type="RefSeq" id="NP_001026934.1">
    <property type="nucleotide sequence ID" value="NM_001031764.2"/>
</dbReference>
<dbReference type="BMRB" id="Q56JV3"/>
<dbReference type="SMR" id="Q56JV3"/>
<dbReference type="FunCoup" id="Q56JV3">
    <property type="interactions" value="703"/>
</dbReference>
<dbReference type="STRING" id="9913.ENSBTAP00000050644"/>
<dbReference type="PaxDb" id="9913-ENSBTAP00000050644"/>
<dbReference type="GeneID" id="528204"/>
<dbReference type="KEGG" id="bta:528204"/>
<dbReference type="CTD" id="6009"/>
<dbReference type="eggNOG" id="KOG0395">
    <property type="taxonomic scope" value="Eukaryota"/>
</dbReference>
<dbReference type="InParanoid" id="Q56JV3"/>
<dbReference type="OrthoDB" id="25818at2759"/>
<dbReference type="Proteomes" id="UP000009136">
    <property type="component" value="Unplaced"/>
</dbReference>
<dbReference type="GO" id="GO:0005829">
    <property type="term" value="C:cytosol"/>
    <property type="evidence" value="ECO:0007669"/>
    <property type="project" value="UniProtKB-SubCell"/>
</dbReference>
<dbReference type="GO" id="GO:0012505">
    <property type="term" value="C:endomembrane system"/>
    <property type="evidence" value="ECO:0000250"/>
    <property type="project" value="UniProtKB"/>
</dbReference>
<dbReference type="GO" id="GO:0005789">
    <property type="term" value="C:endoplasmic reticulum membrane"/>
    <property type="evidence" value="ECO:0007669"/>
    <property type="project" value="UniProtKB-SubCell"/>
</dbReference>
<dbReference type="GO" id="GO:0000139">
    <property type="term" value="C:Golgi membrane"/>
    <property type="evidence" value="ECO:0007669"/>
    <property type="project" value="UniProtKB-SubCell"/>
</dbReference>
<dbReference type="GO" id="GO:0005765">
    <property type="term" value="C:lysosomal membrane"/>
    <property type="evidence" value="ECO:0000250"/>
    <property type="project" value="UniProtKB"/>
</dbReference>
<dbReference type="GO" id="GO:0005886">
    <property type="term" value="C:plasma membrane"/>
    <property type="evidence" value="ECO:0000318"/>
    <property type="project" value="GO_Central"/>
</dbReference>
<dbReference type="GO" id="GO:0019003">
    <property type="term" value="F:GDP binding"/>
    <property type="evidence" value="ECO:0000318"/>
    <property type="project" value="GO_Central"/>
</dbReference>
<dbReference type="GO" id="GO:0005525">
    <property type="term" value="F:GTP binding"/>
    <property type="evidence" value="ECO:0000250"/>
    <property type="project" value="UniProtKB"/>
</dbReference>
<dbReference type="GO" id="GO:0003924">
    <property type="term" value="F:GTPase activity"/>
    <property type="evidence" value="ECO:0000250"/>
    <property type="project" value="UniProtKB"/>
</dbReference>
<dbReference type="GO" id="GO:0046872">
    <property type="term" value="F:metal ion binding"/>
    <property type="evidence" value="ECO:0007669"/>
    <property type="project" value="UniProtKB-KW"/>
</dbReference>
<dbReference type="GO" id="GO:0030295">
    <property type="term" value="F:protein kinase activator activity"/>
    <property type="evidence" value="ECO:0000250"/>
    <property type="project" value="UniProtKB"/>
</dbReference>
<dbReference type="GO" id="GO:0032008">
    <property type="term" value="P:positive regulation of TOR signaling"/>
    <property type="evidence" value="ECO:0000250"/>
    <property type="project" value="UniProtKB"/>
</dbReference>
<dbReference type="GO" id="GO:1904263">
    <property type="term" value="P:positive regulation of TORC1 signaling"/>
    <property type="evidence" value="ECO:0000250"/>
    <property type="project" value="UniProtKB"/>
</dbReference>
<dbReference type="GO" id="GO:0007264">
    <property type="term" value="P:small GTPase-mediated signal transduction"/>
    <property type="evidence" value="ECO:0000318"/>
    <property type="project" value="GO_Central"/>
</dbReference>
<dbReference type="CDD" id="cd04137">
    <property type="entry name" value="RheB"/>
    <property type="match status" value="1"/>
</dbReference>
<dbReference type="FunFam" id="3.40.50.300:FF:000273">
    <property type="entry name" value="GTP-binding protein Rheb homolog"/>
    <property type="match status" value="1"/>
</dbReference>
<dbReference type="Gene3D" id="3.40.50.300">
    <property type="entry name" value="P-loop containing nucleotide triphosphate hydrolases"/>
    <property type="match status" value="1"/>
</dbReference>
<dbReference type="InterPro" id="IPR027417">
    <property type="entry name" value="P-loop_NTPase"/>
</dbReference>
<dbReference type="InterPro" id="IPR005225">
    <property type="entry name" value="Small_GTP-bd"/>
</dbReference>
<dbReference type="InterPro" id="IPR001806">
    <property type="entry name" value="Small_GTPase"/>
</dbReference>
<dbReference type="InterPro" id="IPR020849">
    <property type="entry name" value="Small_GTPase_Ras-type"/>
</dbReference>
<dbReference type="NCBIfam" id="TIGR00231">
    <property type="entry name" value="small_GTP"/>
    <property type="match status" value="1"/>
</dbReference>
<dbReference type="PANTHER" id="PTHR24070">
    <property type="entry name" value="RAS, DI-RAS, AND RHEB FAMILY MEMBERS OF SMALL GTPASE SUPERFAMILY"/>
    <property type="match status" value="1"/>
</dbReference>
<dbReference type="Pfam" id="PF00071">
    <property type="entry name" value="Ras"/>
    <property type="match status" value="1"/>
</dbReference>
<dbReference type="PRINTS" id="PR00449">
    <property type="entry name" value="RASTRNSFRMNG"/>
</dbReference>
<dbReference type="SMART" id="SM00175">
    <property type="entry name" value="RAB"/>
    <property type="match status" value="1"/>
</dbReference>
<dbReference type="SMART" id="SM00173">
    <property type="entry name" value="RAS"/>
    <property type="match status" value="1"/>
</dbReference>
<dbReference type="SMART" id="SM00174">
    <property type="entry name" value="RHO"/>
    <property type="match status" value="1"/>
</dbReference>
<dbReference type="SUPFAM" id="SSF52540">
    <property type="entry name" value="P-loop containing nucleoside triphosphate hydrolases"/>
    <property type="match status" value="1"/>
</dbReference>
<dbReference type="PROSITE" id="PS51421">
    <property type="entry name" value="RAS"/>
    <property type="match status" value="1"/>
</dbReference>
<keyword id="KW-0963">Cytoplasm</keyword>
<keyword id="KW-0256">Endoplasmic reticulum</keyword>
<keyword id="KW-0333">Golgi apparatus</keyword>
<keyword id="KW-0342">GTP-binding</keyword>
<keyword id="KW-0378">Hydrolase</keyword>
<keyword id="KW-1017">Isopeptide bond</keyword>
<keyword id="KW-0449">Lipoprotein</keyword>
<keyword id="KW-0458">Lysosome</keyword>
<keyword id="KW-0460">Magnesium</keyword>
<keyword id="KW-0472">Membrane</keyword>
<keyword id="KW-0479">Metal-binding</keyword>
<keyword id="KW-0488">Methylation</keyword>
<keyword id="KW-0547">Nucleotide-binding</keyword>
<keyword id="KW-0597">Phosphoprotein</keyword>
<keyword id="KW-0636">Prenylation</keyword>
<keyword id="KW-1185">Reference proteome</keyword>
<keyword id="KW-0832">Ubl conjugation</keyword>
<protein>
    <recommendedName>
        <fullName>GTP-binding protein Rheb</fullName>
        <ecNumber evidence="1">3.6.5.-</ecNumber>
    </recommendedName>
    <alternativeName>
        <fullName>Ras homolog enriched in brain</fullName>
    </alternativeName>
</protein>
<proteinExistence type="evidence at transcript level"/>
<accession>Q56JV3</accession>
<reference key="1">
    <citation type="submission" date="2005-01" db="EMBL/GenBank/DDBJ databases">
        <title>Analysis of sequences obtained from constructed full-length bovine cDNA libraries.</title>
        <authorList>
            <person name="Yu J."/>
            <person name="Meng Y."/>
            <person name="Wang Z."/>
            <person name="Hansen C."/>
            <person name="Li C."/>
            <person name="Moore S.S."/>
        </authorList>
    </citation>
    <scope>NUCLEOTIDE SEQUENCE [LARGE SCALE MRNA]</scope>
    <source>
        <tissue>Lymphoid epithelium</tissue>
    </source>
</reference>
<evidence type="ECO:0000250" key="1">
    <source>
        <dbReference type="UniProtKB" id="Q15382"/>
    </source>
</evidence>
<evidence type="ECO:0000250" key="2">
    <source>
        <dbReference type="UniProtKB" id="Q921J2"/>
    </source>
</evidence>
<evidence type="ECO:0000305" key="3"/>